<gene>
    <name evidence="4" type="primary">DVL2</name>
    <name evidence="5" type="synonym">RTFL19</name>
    <name evidence="7" type="ordered locus">At3g02493</name>
    <name evidence="8" type="ORF">F16B3</name>
</gene>
<sequence length="45" mass="5473">MESIMSLKRKEKKSQSRRLGKYLKEQKGRIYIIRRCVMMLLCSHD</sequence>
<proteinExistence type="evidence at transcript level"/>
<dbReference type="EMBL" id="AY254318">
    <property type="protein sequence ID" value="AAP13817.1"/>
    <property type="molecule type" value="mRNA"/>
</dbReference>
<dbReference type="EMBL" id="AC021640">
    <property type="status" value="NOT_ANNOTATED_CDS"/>
    <property type="molecule type" value="Genomic_DNA"/>
</dbReference>
<dbReference type="EMBL" id="CP002686">
    <property type="protein sequence ID" value="AEE73818.1"/>
    <property type="molecule type" value="Genomic_DNA"/>
</dbReference>
<dbReference type="RefSeq" id="NP_001078094.1">
    <property type="nucleotide sequence ID" value="NM_001084625.2"/>
</dbReference>
<dbReference type="STRING" id="3702.Q6X5U1"/>
<dbReference type="PaxDb" id="3702-AT3G02493.1"/>
<dbReference type="EnsemblPlants" id="AT3G02493.1">
    <property type="protein sequence ID" value="AT3G02493.1"/>
    <property type="gene ID" value="AT3G02493"/>
</dbReference>
<dbReference type="GeneID" id="5007978"/>
<dbReference type="Gramene" id="AT3G02493.1">
    <property type="protein sequence ID" value="AT3G02493.1"/>
    <property type="gene ID" value="AT3G02493"/>
</dbReference>
<dbReference type="KEGG" id="ath:AT3G02493"/>
<dbReference type="Araport" id="AT3G02493"/>
<dbReference type="TAIR" id="AT3G02493">
    <property type="gene designation" value="RTFL19"/>
</dbReference>
<dbReference type="HOGENOM" id="CLU_150897_5_1_1"/>
<dbReference type="InParanoid" id="Q6X5U1"/>
<dbReference type="PhylomeDB" id="Q6X5U1"/>
<dbReference type="PRO" id="PR:Q6X5U1"/>
<dbReference type="Proteomes" id="UP000006548">
    <property type="component" value="Chromosome 3"/>
</dbReference>
<dbReference type="GO" id="GO:0005886">
    <property type="term" value="C:plasma membrane"/>
    <property type="evidence" value="ECO:0000250"/>
    <property type="project" value="UniProtKB"/>
</dbReference>
<dbReference type="GO" id="GO:0008285">
    <property type="term" value="P:negative regulation of cell population proliferation"/>
    <property type="evidence" value="ECO:0000250"/>
    <property type="project" value="UniProtKB"/>
</dbReference>
<dbReference type="GO" id="GO:0048367">
    <property type="term" value="P:shoot system development"/>
    <property type="evidence" value="ECO:0000315"/>
    <property type="project" value="TAIR"/>
</dbReference>
<dbReference type="InterPro" id="IPR012552">
    <property type="entry name" value="DVL"/>
</dbReference>
<dbReference type="InterPro" id="IPR052153">
    <property type="entry name" value="DVL/RTFL_small_peptides"/>
</dbReference>
<dbReference type="PANTHER" id="PTHR47855">
    <property type="entry name" value="OS01G0525701 PROTEIN"/>
    <property type="match status" value="1"/>
</dbReference>
<dbReference type="PANTHER" id="PTHR47855:SF3">
    <property type="entry name" value="SMALL POLYPEPTIDE DEVIL 1-RELATED"/>
    <property type="match status" value="1"/>
</dbReference>
<dbReference type="Pfam" id="PF08137">
    <property type="entry name" value="DVL"/>
    <property type="match status" value="1"/>
</dbReference>
<evidence type="ECO:0000250" key="1">
    <source>
        <dbReference type="UniProtKB" id="Q7XXN8"/>
    </source>
</evidence>
<evidence type="ECO:0000255" key="2"/>
<evidence type="ECO:0000269" key="3">
    <source>
    </source>
</evidence>
<evidence type="ECO:0000303" key="4">
    <source>
    </source>
</evidence>
<evidence type="ECO:0000303" key="5">
    <source>
    </source>
</evidence>
<evidence type="ECO:0000305" key="6"/>
<evidence type="ECO:0000312" key="7">
    <source>
        <dbReference type="Araport" id="AT3G02493"/>
    </source>
</evidence>
<evidence type="ECO:0000312" key="8">
    <source>
        <dbReference type="EMBL" id="AC021640"/>
    </source>
</evidence>
<organism>
    <name type="scientific">Arabidopsis thaliana</name>
    <name type="common">Mouse-ear cress</name>
    <dbReference type="NCBI Taxonomy" id="3702"/>
    <lineage>
        <taxon>Eukaryota</taxon>
        <taxon>Viridiplantae</taxon>
        <taxon>Streptophyta</taxon>
        <taxon>Embryophyta</taxon>
        <taxon>Tracheophyta</taxon>
        <taxon>Spermatophyta</taxon>
        <taxon>Magnoliopsida</taxon>
        <taxon>eudicotyledons</taxon>
        <taxon>Gunneridae</taxon>
        <taxon>Pentapetalae</taxon>
        <taxon>rosids</taxon>
        <taxon>malvids</taxon>
        <taxon>Brassicales</taxon>
        <taxon>Brassicaceae</taxon>
        <taxon>Camelineae</taxon>
        <taxon>Arabidopsis</taxon>
    </lineage>
</organism>
<name>DVL2_ARATH</name>
<reference key="1">
    <citation type="journal article" date="2004" name="Plant J.">
        <title>DVL, a novel class of small polypeptides: overexpression alters Arabidopsis development.</title>
        <authorList>
            <person name="Wen J."/>
            <person name="Lease K.A."/>
            <person name="Walker J.C."/>
        </authorList>
    </citation>
    <scope>NUCLEOTIDE SEQUENCE [MRNA]</scope>
    <scope>FUNCTION</scope>
    <scope>TISSUE SPECIFICITY</scope>
    <scope>GENE FAMILY</scope>
    <scope>NOMENCLATURE</scope>
    <source>
        <strain>cv. Columbia</strain>
    </source>
</reference>
<reference key="2">
    <citation type="journal article" date="2000" name="Nature">
        <title>Sequence and analysis of chromosome 3 of the plant Arabidopsis thaliana.</title>
        <authorList>
            <person name="Salanoubat M."/>
            <person name="Lemcke K."/>
            <person name="Rieger M."/>
            <person name="Ansorge W."/>
            <person name="Unseld M."/>
            <person name="Fartmann B."/>
            <person name="Valle G."/>
            <person name="Bloecker H."/>
            <person name="Perez-Alonso M."/>
            <person name="Obermaier B."/>
            <person name="Delseny M."/>
            <person name="Boutry M."/>
            <person name="Grivell L.A."/>
            <person name="Mache R."/>
            <person name="Puigdomenech P."/>
            <person name="De Simone V."/>
            <person name="Choisne N."/>
            <person name="Artiguenave F."/>
            <person name="Robert C."/>
            <person name="Brottier P."/>
            <person name="Wincker P."/>
            <person name="Cattolico L."/>
            <person name="Weissenbach J."/>
            <person name="Saurin W."/>
            <person name="Quetier F."/>
            <person name="Schaefer M."/>
            <person name="Mueller-Auer S."/>
            <person name="Gabel C."/>
            <person name="Fuchs M."/>
            <person name="Benes V."/>
            <person name="Wurmbach E."/>
            <person name="Drzonek H."/>
            <person name="Erfle H."/>
            <person name="Jordan N."/>
            <person name="Bangert S."/>
            <person name="Wiedelmann R."/>
            <person name="Kranz H."/>
            <person name="Voss H."/>
            <person name="Holland R."/>
            <person name="Brandt P."/>
            <person name="Nyakatura G."/>
            <person name="Vezzi A."/>
            <person name="D'Angelo M."/>
            <person name="Pallavicini A."/>
            <person name="Toppo S."/>
            <person name="Simionati B."/>
            <person name="Conrad A."/>
            <person name="Hornischer K."/>
            <person name="Kauer G."/>
            <person name="Loehnert T.-H."/>
            <person name="Nordsiek G."/>
            <person name="Reichelt J."/>
            <person name="Scharfe M."/>
            <person name="Schoen O."/>
            <person name="Bargues M."/>
            <person name="Terol J."/>
            <person name="Climent J."/>
            <person name="Navarro P."/>
            <person name="Collado C."/>
            <person name="Perez-Perez A."/>
            <person name="Ottenwaelder B."/>
            <person name="Duchemin D."/>
            <person name="Cooke R."/>
            <person name="Laudie M."/>
            <person name="Berger-Llauro C."/>
            <person name="Purnelle B."/>
            <person name="Masuy D."/>
            <person name="de Haan M."/>
            <person name="Maarse A.C."/>
            <person name="Alcaraz J.-P."/>
            <person name="Cottet A."/>
            <person name="Casacuberta E."/>
            <person name="Monfort A."/>
            <person name="Argiriou A."/>
            <person name="Flores M."/>
            <person name="Liguori R."/>
            <person name="Vitale D."/>
            <person name="Mannhaupt G."/>
            <person name="Haase D."/>
            <person name="Schoof H."/>
            <person name="Rudd S."/>
            <person name="Zaccaria P."/>
            <person name="Mewes H.-W."/>
            <person name="Mayer K.F.X."/>
            <person name="Kaul S."/>
            <person name="Town C.D."/>
            <person name="Koo H.L."/>
            <person name="Tallon L.J."/>
            <person name="Jenkins J."/>
            <person name="Rooney T."/>
            <person name="Rizzo M."/>
            <person name="Walts A."/>
            <person name="Utterback T."/>
            <person name="Fujii C.Y."/>
            <person name="Shea T.P."/>
            <person name="Creasy T.H."/>
            <person name="Haas B."/>
            <person name="Maiti R."/>
            <person name="Wu D."/>
            <person name="Peterson J."/>
            <person name="Van Aken S."/>
            <person name="Pai G."/>
            <person name="Militscher J."/>
            <person name="Sellers P."/>
            <person name="Gill J.E."/>
            <person name="Feldblyum T.V."/>
            <person name="Preuss D."/>
            <person name="Lin X."/>
            <person name="Nierman W.C."/>
            <person name="Salzberg S.L."/>
            <person name="White O."/>
            <person name="Venter J.C."/>
            <person name="Fraser C.M."/>
            <person name="Kaneko T."/>
            <person name="Nakamura Y."/>
            <person name="Sato S."/>
            <person name="Kato T."/>
            <person name="Asamizu E."/>
            <person name="Sasamoto S."/>
            <person name="Kimura T."/>
            <person name="Idesawa K."/>
            <person name="Kawashima K."/>
            <person name="Kishida Y."/>
            <person name="Kiyokawa C."/>
            <person name="Kohara M."/>
            <person name="Matsumoto M."/>
            <person name="Matsuno A."/>
            <person name="Muraki A."/>
            <person name="Nakayama S."/>
            <person name="Nakazaki N."/>
            <person name="Shinpo S."/>
            <person name="Takeuchi C."/>
            <person name="Wada T."/>
            <person name="Watanabe A."/>
            <person name="Yamada M."/>
            <person name="Yasuda M."/>
            <person name="Tabata S."/>
        </authorList>
    </citation>
    <scope>NUCLEOTIDE SEQUENCE [LARGE SCALE GENOMIC DNA]</scope>
    <source>
        <strain>cv. Columbia</strain>
    </source>
</reference>
<reference key="3">
    <citation type="journal article" date="2017" name="Plant J.">
        <title>Araport11: a complete reannotation of the Arabidopsis thaliana reference genome.</title>
        <authorList>
            <person name="Cheng C.Y."/>
            <person name="Krishnakumar V."/>
            <person name="Chan A.P."/>
            <person name="Thibaud-Nissen F."/>
            <person name="Schobel S."/>
            <person name="Town C.D."/>
        </authorList>
    </citation>
    <scope>GENOME REANNOTATION</scope>
    <source>
        <strain>cv. Columbia</strain>
    </source>
</reference>
<reference key="4">
    <citation type="journal article" date="2004" name="Plant J.">
        <title>Overexpression of a novel small peptide ROTUNDIFOLIA4 decreases cell proliferation and alters leaf shape in Arabidopsis thaliana.</title>
        <authorList>
            <person name="Narita N.N."/>
            <person name="Moore S."/>
            <person name="Horiguchi G."/>
            <person name="Kubo M."/>
            <person name="Demura T."/>
            <person name="Fukuda H."/>
            <person name="Goodrich J."/>
            <person name="Tsukaya H."/>
        </authorList>
    </citation>
    <scope>GENE FAMILY</scope>
    <source>
        <strain>cv. Columbia</strain>
        <strain>cv. Landsberg erecta</strain>
    </source>
</reference>
<reference key="5">
    <citation type="journal article" date="2015" name="J. Plant Res.">
        <title>Comparative analysis of the RTFL peptide family on the control of plant organogenesis.</title>
        <authorList>
            <person name="Guo P."/>
            <person name="Yoshimura A."/>
            <person name="Ishikawa N."/>
            <person name="Yamaguchi T."/>
            <person name="Guo Y."/>
            <person name="Tsukaya H."/>
        </authorList>
    </citation>
    <scope>REVIEW</scope>
    <scope>GENE FAMILY</scope>
    <scope>NOMENCLATURE</scope>
    <source>
        <strain>cv. Columbia</strain>
    </source>
</reference>
<comment type="function">
    <text evidence="3">Small polypeptide acting as a regulatory molecule which coordinates cellular responses required for differentiation, growth and development, including leaves shape, pedicule elongation, inflorescence organization and fruit maturation, probably by restricting polar cell proliferation in lateral organs and coordinating socket cell recruitment and differentiation at trichome sites.</text>
</comment>
<comment type="subcellular location">
    <subcellularLocation>
        <location evidence="1">Cell membrane</location>
        <topology evidence="2">Single-pass membrane protein</topology>
    </subcellularLocation>
</comment>
<comment type="tissue specificity">
    <text evidence="3">Mostly expressed in stems and, to a lower extent, in roots and leaves.</text>
</comment>
<comment type="similarity">
    <text evidence="6">Belongs to the DVL/RTFL small polypeptides family.</text>
</comment>
<keyword id="KW-1003">Cell membrane</keyword>
<keyword id="KW-0217">Developmental protein</keyword>
<keyword id="KW-0472">Membrane</keyword>
<keyword id="KW-1185">Reference proteome</keyword>
<keyword id="KW-0812">Transmembrane</keyword>
<keyword id="KW-1133">Transmembrane helix</keyword>
<feature type="chain" id="PRO_0000452770" description="Small polypeptide DEVIL 2">
    <location>
        <begin position="1"/>
        <end position="45"/>
    </location>
</feature>
<feature type="transmembrane region" description="Helical" evidence="2">
    <location>
        <begin position="17"/>
        <end position="33"/>
    </location>
</feature>
<feature type="region of interest" description="Required for DVL/RTFL small polypeptide activity" evidence="1">
    <location>
        <begin position="14"/>
        <end position="45"/>
    </location>
</feature>
<protein>
    <recommendedName>
        <fullName evidence="4">Small polypeptide DEVIL 2</fullName>
    </recommendedName>
    <alternativeName>
        <fullName evidence="5">Small polypeptide ROTUNDIFOLIA like 19</fullName>
        <shortName evidence="5">Small polypeptide ROT-FOUR-LIKE 19</shortName>
    </alternativeName>
</protein>
<accession>Q6X5U1</accession>